<organism>
    <name type="scientific">Streptococcus pneumoniae serotype 19F (strain G54)</name>
    <dbReference type="NCBI Taxonomy" id="512566"/>
    <lineage>
        <taxon>Bacteria</taxon>
        <taxon>Bacillati</taxon>
        <taxon>Bacillota</taxon>
        <taxon>Bacilli</taxon>
        <taxon>Lactobacillales</taxon>
        <taxon>Streptococcaceae</taxon>
        <taxon>Streptococcus</taxon>
    </lineage>
</organism>
<feature type="chain" id="PRO_1000119762" description="Chaperone protein DnaK">
    <location>
        <begin position="1"/>
        <end position="607"/>
    </location>
</feature>
<feature type="region of interest" description="Disordered" evidence="2">
    <location>
        <begin position="579"/>
        <end position="607"/>
    </location>
</feature>
<feature type="compositionally biased region" description="Low complexity" evidence="2">
    <location>
        <begin position="579"/>
        <end position="591"/>
    </location>
</feature>
<feature type="compositionally biased region" description="Acidic residues" evidence="2">
    <location>
        <begin position="598"/>
        <end position="607"/>
    </location>
</feature>
<feature type="modified residue" description="Phosphothreonine; by autocatalysis" evidence="1">
    <location>
        <position position="173"/>
    </location>
</feature>
<comment type="function">
    <text evidence="1">Acts as a chaperone.</text>
</comment>
<comment type="induction">
    <text evidence="1">By stress conditions e.g. heat shock.</text>
</comment>
<comment type="similarity">
    <text evidence="1">Belongs to the heat shock protein 70 family.</text>
</comment>
<evidence type="ECO:0000255" key="1">
    <source>
        <dbReference type="HAMAP-Rule" id="MF_00332"/>
    </source>
</evidence>
<evidence type="ECO:0000256" key="2">
    <source>
        <dbReference type="SAM" id="MobiDB-lite"/>
    </source>
</evidence>
<name>DNAK_STRP4</name>
<sequence length="607" mass="64791">MSKIIGIDLGTTNSAVAVLEGTESKIIANPEGNRTTPSVVSFKNGEIIVGDAAKRQAVTNPDTVISIKSKMGTSEKVSANGKEYTPQEISAMILQYLKGYAEDYLGEKVTKAVITVPAYFNDAQRQATKDAGKIAGLEVXRIVNEPTAAALAYGLDKTDKEEKXXVFDLGGGTFDVSILELGDGVFDVLSTAGDNKLGGDDFDQKIIDHLVAEFKKENGIDLSTDKMAMQRLKDAAEKAKKDLSGVTSTQISLPFITAGEAGPLHLEMTLTRAKFDDLTRDLVERTKVPVRQALSDAGLSLSEIDEVILVGGSTRIPAVVEAVKAETGKEPNKSVNPDEVVAMGAAIQGGVITGDVKDVVLLDVTPLSLGIETMGGVFTKLIDRNTTIPTSKSQVFSTAADNQPAVDIHVLQGERPMAADNKTLGRFQLTDIPAAPRGIPQIEVTFDIDKNGIVSVKAKDLGTQKEQTIVIQSNSGLTDEEIDRMMKDAEANAEADKKRKEEVDLRNEVDQAIFATEKTIKETEGKGFDAERDAAQAALDDLKKAQEDNNLDDMKAKLEALNEKAQGLAVKLYEQAAAAQQAQEGAEGAQATGNAGDDVVDGEFTEK</sequence>
<dbReference type="EMBL" id="CP001015">
    <property type="protein sequence ID" value="ACF55265.1"/>
    <property type="molecule type" value="Genomic_DNA"/>
</dbReference>
<dbReference type="KEGG" id="spx:SPG_0468"/>
<dbReference type="HOGENOM" id="CLU_005965_2_4_9"/>
<dbReference type="GO" id="GO:0005524">
    <property type="term" value="F:ATP binding"/>
    <property type="evidence" value="ECO:0007669"/>
    <property type="project" value="UniProtKB-UniRule"/>
</dbReference>
<dbReference type="GO" id="GO:0140662">
    <property type="term" value="F:ATP-dependent protein folding chaperone"/>
    <property type="evidence" value="ECO:0007669"/>
    <property type="project" value="InterPro"/>
</dbReference>
<dbReference type="GO" id="GO:0051082">
    <property type="term" value="F:unfolded protein binding"/>
    <property type="evidence" value="ECO:0007669"/>
    <property type="project" value="InterPro"/>
</dbReference>
<dbReference type="CDD" id="cd10234">
    <property type="entry name" value="ASKHA_NBD_HSP70_DnaK-like"/>
    <property type="match status" value="1"/>
</dbReference>
<dbReference type="FunFam" id="2.60.34.10:FF:000014">
    <property type="entry name" value="Chaperone protein DnaK HSP70"/>
    <property type="match status" value="1"/>
</dbReference>
<dbReference type="FunFam" id="1.20.1270.10:FF:000004">
    <property type="entry name" value="Molecular chaperone DnaK"/>
    <property type="match status" value="1"/>
</dbReference>
<dbReference type="FunFam" id="3.30.420.40:FF:000071">
    <property type="entry name" value="Molecular chaperone DnaK"/>
    <property type="match status" value="1"/>
</dbReference>
<dbReference type="FunFam" id="3.90.640.10:FF:000003">
    <property type="entry name" value="Molecular chaperone DnaK"/>
    <property type="match status" value="1"/>
</dbReference>
<dbReference type="Gene3D" id="1.20.1270.10">
    <property type="match status" value="1"/>
</dbReference>
<dbReference type="Gene3D" id="3.30.420.40">
    <property type="match status" value="2"/>
</dbReference>
<dbReference type="Gene3D" id="3.90.640.10">
    <property type="entry name" value="Actin, Chain A, domain 4"/>
    <property type="match status" value="1"/>
</dbReference>
<dbReference type="Gene3D" id="2.60.34.10">
    <property type="entry name" value="Substrate Binding Domain Of DNAk, Chain A, domain 1"/>
    <property type="match status" value="1"/>
</dbReference>
<dbReference type="HAMAP" id="MF_00332">
    <property type="entry name" value="DnaK"/>
    <property type="match status" value="1"/>
</dbReference>
<dbReference type="InterPro" id="IPR043129">
    <property type="entry name" value="ATPase_NBD"/>
</dbReference>
<dbReference type="InterPro" id="IPR012725">
    <property type="entry name" value="Chaperone_DnaK"/>
</dbReference>
<dbReference type="InterPro" id="IPR018181">
    <property type="entry name" value="Heat_shock_70_CS"/>
</dbReference>
<dbReference type="InterPro" id="IPR029048">
    <property type="entry name" value="HSP70_C_sf"/>
</dbReference>
<dbReference type="InterPro" id="IPR029047">
    <property type="entry name" value="HSP70_peptide-bd_sf"/>
</dbReference>
<dbReference type="InterPro" id="IPR013126">
    <property type="entry name" value="Hsp_70_fam"/>
</dbReference>
<dbReference type="NCBIfam" id="NF001413">
    <property type="entry name" value="PRK00290.1"/>
    <property type="match status" value="1"/>
</dbReference>
<dbReference type="NCBIfam" id="TIGR02350">
    <property type="entry name" value="prok_dnaK"/>
    <property type="match status" value="1"/>
</dbReference>
<dbReference type="PANTHER" id="PTHR19375">
    <property type="entry name" value="HEAT SHOCK PROTEIN 70KDA"/>
    <property type="match status" value="1"/>
</dbReference>
<dbReference type="Pfam" id="PF00012">
    <property type="entry name" value="HSP70"/>
    <property type="match status" value="1"/>
</dbReference>
<dbReference type="PRINTS" id="PR00301">
    <property type="entry name" value="HEATSHOCK70"/>
</dbReference>
<dbReference type="SUPFAM" id="SSF53067">
    <property type="entry name" value="Actin-like ATPase domain"/>
    <property type="match status" value="2"/>
</dbReference>
<dbReference type="SUPFAM" id="SSF100934">
    <property type="entry name" value="Heat shock protein 70kD (HSP70), C-terminal subdomain"/>
    <property type="match status" value="1"/>
</dbReference>
<dbReference type="SUPFAM" id="SSF100920">
    <property type="entry name" value="Heat shock protein 70kD (HSP70), peptide-binding domain"/>
    <property type="match status" value="1"/>
</dbReference>
<dbReference type="PROSITE" id="PS00297">
    <property type="entry name" value="HSP70_1"/>
    <property type="match status" value="1"/>
</dbReference>
<dbReference type="PROSITE" id="PS00329">
    <property type="entry name" value="HSP70_2"/>
    <property type="match status" value="1"/>
</dbReference>
<dbReference type="PROSITE" id="PS01036">
    <property type="entry name" value="HSP70_3"/>
    <property type="match status" value="1"/>
</dbReference>
<reference key="1">
    <citation type="journal article" date="2001" name="Microb. Drug Resist.">
        <title>Annotated draft genomic sequence from a Streptococcus pneumoniae type 19F clinical isolate.</title>
        <authorList>
            <person name="Dopazo J."/>
            <person name="Mendoza A."/>
            <person name="Herrero J."/>
            <person name="Caldara F."/>
            <person name="Humbert Y."/>
            <person name="Friedli L."/>
            <person name="Guerrier M."/>
            <person name="Grand-Schenk E."/>
            <person name="Gandin C."/>
            <person name="de Francesco M."/>
            <person name="Polissi A."/>
            <person name="Buell G."/>
            <person name="Feger G."/>
            <person name="Garcia E."/>
            <person name="Peitsch M."/>
            <person name="Garcia-Bustos J.F."/>
        </authorList>
    </citation>
    <scope>NUCLEOTIDE SEQUENCE [LARGE SCALE GENOMIC DNA]</scope>
    <source>
        <strain>G54</strain>
    </source>
</reference>
<reference key="2">
    <citation type="submission" date="2008-03" db="EMBL/GenBank/DDBJ databases">
        <title>Pneumococcal beta glucoside metabolism investigated by whole genome comparison.</title>
        <authorList>
            <person name="Mulas L."/>
            <person name="Trappetti C."/>
            <person name="Hakenbeck R."/>
            <person name="Iannelli F."/>
            <person name="Pozzi G."/>
            <person name="Davidsen T.M."/>
            <person name="Tettelin H."/>
            <person name="Oggioni M."/>
        </authorList>
    </citation>
    <scope>NUCLEOTIDE SEQUENCE [LARGE SCALE GENOMIC DNA]</scope>
    <source>
        <strain>G54</strain>
    </source>
</reference>
<keyword id="KW-0067">ATP-binding</keyword>
<keyword id="KW-0143">Chaperone</keyword>
<keyword id="KW-0547">Nucleotide-binding</keyword>
<keyword id="KW-0597">Phosphoprotein</keyword>
<keyword id="KW-0346">Stress response</keyword>
<accession>B5E232</accession>
<proteinExistence type="inferred from homology"/>
<gene>
    <name evidence="1" type="primary">dnaK</name>
    <name type="ordered locus">SPG_0468</name>
</gene>
<protein>
    <recommendedName>
        <fullName evidence="1">Chaperone protein DnaK</fullName>
    </recommendedName>
    <alternativeName>
        <fullName evidence="1">HSP70</fullName>
    </alternativeName>
    <alternativeName>
        <fullName evidence="1">Heat shock 70 kDa protein</fullName>
    </alternativeName>
    <alternativeName>
        <fullName evidence="1">Heat shock protein 70</fullName>
    </alternativeName>
</protein>